<feature type="chain" id="PRO_0000163115" description="DNA-directed RNA polymerase subunit epsilon">
    <location>
        <begin position="1"/>
        <end position="70"/>
    </location>
</feature>
<proteinExistence type="inferred from homology"/>
<reference key="1">
    <citation type="journal article" date="2004" name="Nucleic Acids Res.">
        <title>The genome sequence of Bacillus cereus ATCC 10987 reveals metabolic adaptations and a large plasmid related to Bacillus anthracis pXO1.</title>
        <authorList>
            <person name="Rasko D.A."/>
            <person name="Ravel J."/>
            <person name="Oekstad O.A."/>
            <person name="Helgason E."/>
            <person name="Cer R.Z."/>
            <person name="Jiang L."/>
            <person name="Shores K.A."/>
            <person name="Fouts D.E."/>
            <person name="Tourasse N.J."/>
            <person name="Angiuoli S.V."/>
            <person name="Kolonay J.F."/>
            <person name="Nelson W.C."/>
            <person name="Kolstoe A.-B."/>
            <person name="Fraser C.M."/>
            <person name="Read T.D."/>
        </authorList>
    </citation>
    <scope>NUCLEOTIDE SEQUENCE [LARGE SCALE GENOMIC DNA]</scope>
    <source>
        <strain>ATCC 10987 / NRS 248</strain>
    </source>
</reference>
<gene>
    <name evidence="1" type="primary">rpoY</name>
    <name type="ordered locus">BCE_4025</name>
</gene>
<sequence length="70" mass="8247">MIFKVFYQEKMTEVPVRENTKVLYLEATSEKDVRTKLNKFAYNIEFVQSVTGNHLEYEKENADLTLAEIV</sequence>
<evidence type="ECO:0000255" key="1">
    <source>
        <dbReference type="HAMAP-Rule" id="MF_01553"/>
    </source>
</evidence>
<organism>
    <name type="scientific">Bacillus cereus (strain ATCC 10987 / NRS 248)</name>
    <dbReference type="NCBI Taxonomy" id="222523"/>
    <lineage>
        <taxon>Bacteria</taxon>
        <taxon>Bacillati</taxon>
        <taxon>Bacillota</taxon>
        <taxon>Bacilli</taxon>
        <taxon>Bacillales</taxon>
        <taxon>Bacillaceae</taxon>
        <taxon>Bacillus</taxon>
        <taxon>Bacillus cereus group</taxon>
    </lineage>
</organism>
<accession>Q731Z0</accession>
<comment type="function">
    <text evidence="1">A non-essential component of RNA polymerase (RNAP).</text>
</comment>
<comment type="catalytic activity">
    <reaction evidence="1">
        <text>RNA(n) + a ribonucleoside 5'-triphosphate = RNA(n+1) + diphosphate</text>
        <dbReference type="Rhea" id="RHEA:21248"/>
        <dbReference type="Rhea" id="RHEA-COMP:14527"/>
        <dbReference type="Rhea" id="RHEA-COMP:17342"/>
        <dbReference type="ChEBI" id="CHEBI:33019"/>
        <dbReference type="ChEBI" id="CHEBI:61557"/>
        <dbReference type="ChEBI" id="CHEBI:140395"/>
        <dbReference type="EC" id="2.7.7.6"/>
    </reaction>
</comment>
<comment type="subunit">
    <text evidence="1">RNAP is composed of a core of 2 alpha, a beta and a beta' subunit. The core is associated with a delta subunit, and at least one of epsilon or omega. When a sigma factor is associated with the core the holoenzyme is formed, which can initiate transcription.</text>
</comment>
<comment type="similarity">
    <text evidence="1">Belongs to the RNA polymerase subunit epsilon family.</text>
</comment>
<keyword id="KW-0240">DNA-directed RNA polymerase</keyword>
<keyword id="KW-0548">Nucleotidyltransferase</keyword>
<keyword id="KW-0804">Transcription</keyword>
<keyword id="KW-0808">Transferase</keyword>
<protein>
    <recommendedName>
        <fullName evidence="1">DNA-directed RNA polymerase subunit epsilon</fullName>
        <shortName evidence="1">RNAP epsilon subunit</shortName>
        <ecNumber evidence="1">2.7.7.6</ecNumber>
    </recommendedName>
    <alternativeName>
        <fullName evidence="1">RNA polymerase epsilon subunit</fullName>
    </alternativeName>
    <alternativeName>
        <fullName evidence="1">Transcriptase subunit epsilon</fullName>
    </alternativeName>
</protein>
<name>RPOY_BACC1</name>
<dbReference type="EC" id="2.7.7.6" evidence="1"/>
<dbReference type="EMBL" id="AE017194">
    <property type="protein sequence ID" value="AAS42927.1"/>
    <property type="molecule type" value="Genomic_DNA"/>
</dbReference>
<dbReference type="SMR" id="Q731Z0"/>
<dbReference type="DNASU" id="2747858"/>
<dbReference type="KEGG" id="bca:BCE_4025"/>
<dbReference type="HOGENOM" id="CLU_187518_0_0_9"/>
<dbReference type="Proteomes" id="UP000002527">
    <property type="component" value="Chromosome"/>
</dbReference>
<dbReference type="GO" id="GO:0000428">
    <property type="term" value="C:DNA-directed RNA polymerase complex"/>
    <property type="evidence" value="ECO:0007669"/>
    <property type="project" value="UniProtKB-KW"/>
</dbReference>
<dbReference type="GO" id="GO:0003677">
    <property type="term" value="F:DNA binding"/>
    <property type="evidence" value="ECO:0007669"/>
    <property type="project" value="UniProtKB-UniRule"/>
</dbReference>
<dbReference type="GO" id="GO:0003899">
    <property type="term" value="F:DNA-directed RNA polymerase activity"/>
    <property type="evidence" value="ECO:0007669"/>
    <property type="project" value="UniProtKB-UniRule"/>
</dbReference>
<dbReference type="GO" id="GO:0006351">
    <property type="term" value="P:DNA-templated transcription"/>
    <property type="evidence" value="ECO:0007669"/>
    <property type="project" value="UniProtKB-UniRule"/>
</dbReference>
<dbReference type="Gene3D" id="3.10.20.730">
    <property type="entry name" value="RNAP, epsilon subunit-like"/>
    <property type="match status" value="1"/>
</dbReference>
<dbReference type="HAMAP" id="MF_01553">
    <property type="entry name" value="RNApol_bact_RpoY"/>
    <property type="match status" value="1"/>
</dbReference>
<dbReference type="InterPro" id="IPR009907">
    <property type="entry name" value="RpoY"/>
</dbReference>
<dbReference type="NCBIfam" id="NF010188">
    <property type="entry name" value="PRK13667.1"/>
    <property type="match status" value="1"/>
</dbReference>
<dbReference type="Pfam" id="PF07288">
    <property type="entry name" value="RpoY"/>
    <property type="match status" value="1"/>
</dbReference>